<dbReference type="EMBL" id="AM498294">
    <property type="protein sequence ID" value="CAM57295.1"/>
    <property type="molecule type" value="Genomic_DNA"/>
</dbReference>
<dbReference type="SMR" id="B1VB74"/>
<dbReference type="UniPathway" id="UPA00148"/>
<dbReference type="UniPathway" id="UPA00621"/>
<dbReference type="GO" id="GO:0031469">
    <property type="term" value="C:bacterial microcompartment"/>
    <property type="evidence" value="ECO:0007669"/>
    <property type="project" value="UniProtKB-SubCell"/>
</dbReference>
<dbReference type="GO" id="GO:0005524">
    <property type="term" value="F:ATP binding"/>
    <property type="evidence" value="ECO:0007669"/>
    <property type="project" value="UniProtKB-KW"/>
</dbReference>
<dbReference type="GO" id="GO:0008817">
    <property type="term" value="F:corrinoid adenosyltransferase activity"/>
    <property type="evidence" value="ECO:0007669"/>
    <property type="project" value="UniProtKB-EC"/>
</dbReference>
<dbReference type="GO" id="GO:0046872">
    <property type="term" value="F:metal ion binding"/>
    <property type="evidence" value="ECO:0007669"/>
    <property type="project" value="UniProtKB-KW"/>
</dbReference>
<dbReference type="GO" id="GO:0009236">
    <property type="term" value="P:cobalamin biosynthetic process"/>
    <property type="evidence" value="ECO:0007669"/>
    <property type="project" value="UniProtKB-UniPathway"/>
</dbReference>
<dbReference type="GO" id="GO:0051144">
    <property type="term" value="P:propanediol catabolic process"/>
    <property type="evidence" value="ECO:0007669"/>
    <property type="project" value="UniProtKB-UniPathway"/>
</dbReference>
<dbReference type="Gene3D" id="1.20.1200.10">
    <property type="entry name" value="Cobalamin adenosyltransferase-like"/>
    <property type="match status" value="1"/>
</dbReference>
<dbReference type="Gene3D" id="3.30.450.150">
    <property type="entry name" value="Haem-degrading domain"/>
    <property type="match status" value="1"/>
</dbReference>
<dbReference type="InterPro" id="IPR016030">
    <property type="entry name" value="CblAdoTrfase-like"/>
</dbReference>
<dbReference type="InterPro" id="IPR036451">
    <property type="entry name" value="CblAdoTrfase-like_sf"/>
</dbReference>
<dbReference type="InterPro" id="IPR009221">
    <property type="entry name" value="PduO"/>
</dbReference>
<dbReference type="InterPro" id="IPR029499">
    <property type="entry name" value="PduO-typ"/>
</dbReference>
<dbReference type="InterPro" id="IPR005624">
    <property type="entry name" value="PduO/GlcC-like"/>
</dbReference>
<dbReference type="InterPro" id="IPR038084">
    <property type="entry name" value="PduO/GlcC-like_sf"/>
</dbReference>
<dbReference type="NCBIfam" id="TIGR00636">
    <property type="entry name" value="PduO_Nterm"/>
    <property type="match status" value="1"/>
</dbReference>
<dbReference type="PANTHER" id="PTHR12213">
    <property type="entry name" value="CORRINOID ADENOSYLTRANSFERASE"/>
    <property type="match status" value="1"/>
</dbReference>
<dbReference type="PANTHER" id="PTHR12213:SF0">
    <property type="entry name" value="CORRINOID ADENOSYLTRANSFERASE MMAB"/>
    <property type="match status" value="1"/>
</dbReference>
<dbReference type="Pfam" id="PF01923">
    <property type="entry name" value="Cob_adeno_trans"/>
    <property type="match status" value="1"/>
</dbReference>
<dbReference type="Pfam" id="PF03928">
    <property type="entry name" value="HbpS-like"/>
    <property type="match status" value="1"/>
</dbReference>
<dbReference type="PIRSF" id="PIRSF036411">
    <property type="entry name" value="ATR_PduO"/>
    <property type="match status" value="1"/>
</dbReference>
<dbReference type="SUPFAM" id="SSF89028">
    <property type="entry name" value="Cobalamin adenosyltransferase-like"/>
    <property type="match status" value="1"/>
</dbReference>
<dbReference type="SUPFAM" id="SSF143744">
    <property type="entry name" value="GlcG-like"/>
    <property type="match status" value="1"/>
</dbReference>
<sequence>MAIYTRTGDAGTTALFTGQRVSKTHPRVEAYGTLDELNAALSLCVCAAKNPQHRQLLENIQLQLFWFSAELASESEQPAPEQRYISSEEIAALEAAIDTAMGRVPPLRSFILPGRSEAASRLHFARTLARRAERRLVELSTEISVRHVLMRYINRLSDCLYALARAEDHDAHQNNIIQKVAERYLAAIRTSATREPAMSLSFQELHQLTRAAVMRAEELQVPVVISIVDANGTQTVTWRMPDALLVSSELAPKKAWTAVAMKTATHELTSAVQPGAALYGLESHMQGKVVTFGGGYALWREGLLLGGLGISGGSVEQDMDIAETAIAAINVRTHQ</sequence>
<keyword id="KW-0067">ATP-binding</keyword>
<keyword id="KW-1283">Bacterial microcompartment</keyword>
<keyword id="KW-0169">Cobalamin biosynthesis</keyword>
<keyword id="KW-0349">Heme</keyword>
<keyword id="KW-0408">Iron</keyword>
<keyword id="KW-0460">Magnesium</keyword>
<keyword id="KW-0479">Metal-binding</keyword>
<keyword id="KW-0547">Nucleotide-binding</keyword>
<keyword id="KW-0808">Transferase</keyword>
<feature type="chain" id="PRO_0000454281" description="Corrinoid adenosyltransferase PduO">
    <location>
        <begin position="1"/>
        <end position="335"/>
    </location>
</feature>
<feature type="binding site" description="axial binding residue" evidence="1">
    <location>
        <position position="206"/>
    </location>
    <ligand>
        <name>heme</name>
        <dbReference type="ChEBI" id="CHEBI:30413"/>
    </ligand>
    <ligandPart>
        <name>Fe</name>
        <dbReference type="ChEBI" id="CHEBI:18248"/>
    </ligandPart>
</feature>
<organism>
    <name type="scientific">Citrobacter freundii</name>
    <dbReference type="NCBI Taxonomy" id="546"/>
    <lineage>
        <taxon>Bacteria</taxon>
        <taxon>Pseudomonadati</taxon>
        <taxon>Pseudomonadota</taxon>
        <taxon>Gammaproteobacteria</taxon>
        <taxon>Enterobacterales</taxon>
        <taxon>Enterobacteriaceae</taxon>
        <taxon>Citrobacter</taxon>
        <taxon>Citrobacter freundii complex</taxon>
    </lineage>
</organism>
<comment type="function">
    <text evidence="1">Converts cob(I)alamin to adenosylcobalamin (adenosylcob(III)alamin), the cofactor for propanediol dehydratase. Found in the bacterial microcompartment (BMC) dedicated to 1,2-propanediol (1,2-PD) degradation. PduS and PduO allow regeneration of the adenosylcobalamin cofactor within the BMC.</text>
</comment>
<comment type="function">
    <text evidence="2">Expression of a cosmid containing the full 21-gene pdu operon in E.coli allows E.coli to grow on 1,2-propanediol (1,2-PD) with the appearance of bacterial microcompartments (BMC) in its cytoplasm.</text>
</comment>
<comment type="function">
    <text evidence="5">The 1,2-PD-specific bacterial microcompartment (BMC) concentrates low levels of 1,2-PD catabolic enzymes, concentrates volatile reaction intermediates thus enhancing pathway flux and keeps the level of toxic, mutagenic propionaldehyde low.</text>
</comment>
<comment type="catalytic activity">
    <reaction evidence="1">
        <text>cob(I)alamin-[corrinoid adenosyltransferase] + ATP = apo-[corrinoid adenosyltransferase] + adenosylcob(III)alamin + triphosphate</text>
        <dbReference type="Rhea" id="RHEA:56796"/>
        <dbReference type="Rhea" id="RHEA-COMP:14743"/>
        <dbReference type="Rhea" id="RHEA-COMP:14744"/>
        <dbReference type="ChEBI" id="CHEBI:18036"/>
        <dbReference type="ChEBI" id="CHEBI:18408"/>
        <dbReference type="ChEBI" id="CHEBI:30616"/>
        <dbReference type="ChEBI" id="CHEBI:60488"/>
        <dbReference type="ChEBI" id="CHEBI:83228"/>
    </reaction>
</comment>
<comment type="cofactor">
    <cofactor evidence="1">
        <name>heme b</name>
        <dbReference type="ChEBI" id="CHEBI:60344"/>
    </cofactor>
</comment>
<comment type="cofactor">
    <cofactor evidence="1">
        <name>Mg(2+)</name>
        <dbReference type="ChEBI" id="CHEBI:18420"/>
    </cofactor>
</comment>
<comment type="pathway">
    <text evidence="2">Polyol metabolism; 1,2-propanediol degradation.</text>
</comment>
<comment type="pathway">
    <text evidence="4">Cofactor biosynthesis; adenosylcobalamin biosynthesis.</text>
</comment>
<comment type="subunit">
    <text evidence="1">Forms a complex with PduS.</text>
</comment>
<comment type="subcellular location">
    <subcellularLocation>
        <location evidence="2">Bacterial microcompartment</location>
    </subcellularLocation>
</comment>
<comment type="similarity">
    <text evidence="4">Belongs to the Cob(I)alamin adenosyltransferase family. PduO subfamily.</text>
</comment>
<gene>
    <name evidence="3" type="primary">pduO</name>
</gene>
<reference key="1">
    <citation type="journal article" date="2008" name="J. Biol. Chem.">
        <title>Biochemical and Structural Insights into Bacterial Organelle Form and Biogenesis.</title>
        <authorList>
            <person name="Parsons J.B."/>
            <person name="Dinesh S.D."/>
            <person name="Deery E."/>
            <person name="Leech H.K."/>
            <person name="Brindley A.A."/>
            <person name="Heldt D."/>
            <person name="Frank S."/>
            <person name="Smales C.M."/>
            <person name="Lunsdorf H."/>
            <person name="Rambach A."/>
            <person name="Gass M.H."/>
            <person name="Bleloch A."/>
            <person name="McClean K.J."/>
            <person name="Munro A.W."/>
            <person name="Rigby S.E.J."/>
            <person name="Warren M.J."/>
            <person name="Prentice M.B."/>
        </authorList>
    </citation>
    <scope>NUCLEOTIDE SEQUENCE [GENOMIC DNA]</scope>
    <scope>FUNCTION</scope>
    <scope>IDENTIFICATION BY MASS SPECTROMETRY</scope>
    <scope>PATHWAY</scope>
    <scope>SUBCELLULAR LOCATION</scope>
</reference>
<protein>
    <recommendedName>
        <fullName>Corrinoid adenosyltransferase PduO</fullName>
    </recommendedName>
    <alternativeName>
        <fullName>ATP:co(I)rrinoid adenosyltransferase PduO</fullName>
        <shortName>ACA</shortName>
    </alternativeName>
    <alternativeName>
        <fullName>Propanediol utilization protein PduO</fullName>
    </alternativeName>
</protein>
<evidence type="ECO:0000250" key="1">
    <source>
        <dbReference type="UniProtKB" id="Q8ZNR5"/>
    </source>
</evidence>
<evidence type="ECO:0000269" key="2">
    <source>
    </source>
</evidence>
<evidence type="ECO:0000303" key="3">
    <source>
    </source>
</evidence>
<evidence type="ECO:0000305" key="4"/>
<evidence type="ECO:0000305" key="5">
    <source>
    </source>
</evidence>
<name>PDUO_CITFR</name>
<proteinExistence type="evidence at protein level"/>
<accession>B1VB74</accession>